<gene>
    <name evidence="1" type="primary">rpl18a</name>
    <name evidence="1" type="synonym">rpl20e</name>
    <name evidence="1" type="synonym">rplX</name>
    <name type="ordered locus">TGAM_1681</name>
</gene>
<name>RL18A_THEGJ</name>
<feature type="chain" id="PRO_1000204761" description="Large ribosomal subunit protein eL20">
    <location>
        <begin position="1"/>
        <end position="77"/>
    </location>
</feature>
<keyword id="KW-1185">Reference proteome</keyword>
<keyword id="KW-0687">Ribonucleoprotein</keyword>
<keyword id="KW-0689">Ribosomal protein</keyword>
<keyword id="KW-0694">RNA-binding</keyword>
<keyword id="KW-0699">rRNA-binding</keyword>
<comment type="subunit">
    <text evidence="1">Part of the 50S ribosomal subunit. Binds 23S rRNA.</text>
</comment>
<comment type="similarity">
    <text evidence="1">Belongs to the eukaryotic ribosomal protein eL20 family.</text>
</comment>
<evidence type="ECO:0000255" key="1">
    <source>
        <dbReference type="HAMAP-Rule" id="MF_00273"/>
    </source>
</evidence>
<evidence type="ECO:0000305" key="2"/>
<accession>C5A7H1</accession>
<reference key="1">
    <citation type="journal article" date="2007" name="Genome Biol.">
        <title>Genome analysis and genome-wide proteomics of Thermococcus gammatolerans, the most radioresistant organism known amongst the Archaea.</title>
        <authorList>
            <person name="Zivanovic Y."/>
            <person name="Armengaud J."/>
            <person name="Lagorce A."/>
            <person name="Leplat C."/>
            <person name="Guerin P."/>
            <person name="Dutertre M."/>
            <person name="Anthouard V."/>
            <person name="Forterre P."/>
            <person name="Wincker P."/>
            <person name="Confalonieri F."/>
        </authorList>
    </citation>
    <scope>NUCLEOTIDE SEQUENCE [LARGE SCALE GENOMIC DNA]</scope>
    <source>
        <strain>DSM 15229 / JCM 11827 / EJ3</strain>
    </source>
</reference>
<dbReference type="EMBL" id="CP001398">
    <property type="protein sequence ID" value="ACS34183.1"/>
    <property type="molecule type" value="Genomic_DNA"/>
</dbReference>
<dbReference type="RefSeq" id="WP_015859294.1">
    <property type="nucleotide sequence ID" value="NC_012804.1"/>
</dbReference>
<dbReference type="SMR" id="C5A7H1"/>
<dbReference type="STRING" id="593117.TGAM_1681"/>
<dbReference type="PaxDb" id="593117-TGAM_1681"/>
<dbReference type="GeneID" id="7987591"/>
<dbReference type="KEGG" id="tga:TGAM_1681"/>
<dbReference type="PATRIC" id="fig|593117.10.peg.1687"/>
<dbReference type="eggNOG" id="arCOG04175">
    <property type="taxonomic scope" value="Archaea"/>
</dbReference>
<dbReference type="HOGENOM" id="CLU_177460_0_1_2"/>
<dbReference type="OrthoDB" id="191241at2157"/>
<dbReference type="Proteomes" id="UP000001488">
    <property type="component" value="Chromosome"/>
</dbReference>
<dbReference type="GO" id="GO:1990904">
    <property type="term" value="C:ribonucleoprotein complex"/>
    <property type="evidence" value="ECO:0007669"/>
    <property type="project" value="UniProtKB-KW"/>
</dbReference>
<dbReference type="GO" id="GO:0005840">
    <property type="term" value="C:ribosome"/>
    <property type="evidence" value="ECO:0007669"/>
    <property type="project" value="UniProtKB-KW"/>
</dbReference>
<dbReference type="GO" id="GO:0070180">
    <property type="term" value="F:large ribosomal subunit rRNA binding"/>
    <property type="evidence" value="ECO:0007669"/>
    <property type="project" value="UniProtKB-UniRule"/>
</dbReference>
<dbReference type="GO" id="GO:0003735">
    <property type="term" value="F:structural constituent of ribosome"/>
    <property type="evidence" value="ECO:0007669"/>
    <property type="project" value="InterPro"/>
</dbReference>
<dbReference type="GO" id="GO:0006412">
    <property type="term" value="P:translation"/>
    <property type="evidence" value="ECO:0007669"/>
    <property type="project" value="UniProtKB-UniRule"/>
</dbReference>
<dbReference type="Gene3D" id="3.10.20.10">
    <property type="match status" value="1"/>
</dbReference>
<dbReference type="HAMAP" id="MF_00273">
    <property type="entry name" value="Ribosomal_eL20"/>
    <property type="match status" value="1"/>
</dbReference>
<dbReference type="InterPro" id="IPR028877">
    <property type="entry name" value="Ribosomal_eL20"/>
</dbReference>
<dbReference type="InterPro" id="IPR023573">
    <property type="entry name" value="Ribosomal_eL20_dom"/>
</dbReference>
<dbReference type="NCBIfam" id="NF001981">
    <property type="entry name" value="PRK00773.1-1"/>
    <property type="match status" value="1"/>
</dbReference>
<dbReference type="Pfam" id="PF01775">
    <property type="entry name" value="Ribosomal_L18A"/>
    <property type="match status" value="1"/>
</dbReference>
<dbReference type="SUPFAM" id="SSF160374">
    <property type="entry name" value="RplX-like"/>
    <property type="match status" value="1"/>
</dbReference>
<sequence length="77" mass="9190">MEVKVYRVKGIFQRGKLKQPFTKEYRALKPEHVEELVYSEIGSKHRVPRTKIWIESIEEIKPEEAENPVVRRLSLEL</sequence>
<organism>
    <name type="scientific">Thermococcus gammatolerans (strain DSM 15229 / JCM 11827 / EJ3)</name>
    <dbReference type="NCBI Taxonomy" id="593117"/>
    <lineage>
        <taxon>Archaea</taxon>
        <taxon>Methanobacteriati</taxon>
        <taxon>Methanobacteriota</taxon>
        <taxon>Thermococci</taxon>
        <taxon>Thermococcales</taxon>
        <taxon>Thermococcaceae</taxon>
        <taxon>Thermococcus</taxon>
    </lineage>
</organism>
<proteinExistence type="inferred from homology"/>
<protein>
    <recommendedName>
        <fullName evidence="1">Large ribosomal subunit protein eL20</fullName>
    </recommendedName>
    <alternativeName>
        <fullName evidence="2">50S ribosomal protein L18Ae</fullName>
    </alternativeName>
    <alternativeName>
        <fullName evidence="1">50S ribosomal protein L20e</fullName>
    </alternativeName>
    <alternativeName>
        <fullName evidence="1">50S ribosomal protein LX</fullName>
    </alternativeName>
</protein>